<organism>
    <name type="scientific">Methanococcus maripaludis (strain C6 / ATCC BAA-1332)</name>
    <dbReference type="NCBI Taxonomy" id="444158"/>
    <lineage>
        <taxon>Archaea</taxon>
        <taxon>Methanobacteriati</taxon>
        <taxon>Methanobacteriota</taxon>
        <taxon>Methanomada group</taxon>
        <taxon>Methanococci</taxon>
        <taxon>Methanococcales</taxon>
        <taxon>Methanococcaceae</taxon>
        <taxon>Methanococcus</taxon>
    </lineage>
</organism>
<dbReference type="EMBL" id="CP000867">
    <property type="protein sequence ID" value="ABX02083.1"/>
    <property type="molecule type" value="Genomic_DNA"/>
</dbReference>
<dbReference type="SMR" id="A9A9R0"/>
<dbReference type="STRING" id="444158.MmarC6_1270"/>
<dbReference type="KEGG" id="mmx:MmarC6_1270"/>
<dbReference type="eggNOG" id="arCOG04098">
    <property type="taxonomic scope" value="Archaea"/>
</dbReference>
<dbReference type="HOGENOM" id="CLU_083987_0_2_2"/>
<dbReference type="OrthoDB" id="314984at2157"/>
<dbReference type="PhylomeDB" id="A9A9R0"/>
<dbReference type="GO" id="GO:0022625">
    <property type="term" value="C:cytosolic large ribosomal subunit"/>
    <property type="evidence" value="ECO:0007669"/>
    <property type="project" value="TreeGrafter"/>
</dbReference>
<dbReference type="GO" id="GO:0019843">
    <property type="term" value="F:rRNA binding"/>
    <property type="evidence" value="ECO:0007669"/>
    <property type="project" value="UniProtKB-UniRule"/>
</dbReference>
<dbReference type="GO" id="GO:0003735">
    <property type="term" value="F:structural constituent of ribosome"/>
    <property type="evidence" value="ECO:0007669"/>
    <property type="project" value="InterPro"/>
</dbReference>
<dbReference type="GO" id="GO:0002181">
    <property type="term" value="P:cytoplasmic translation"/>
    <property type="evidence" value="ECO:0007669"/>
    <property type="project" value="TreeGrafter"/>
</dbReference>
<dbReference type="CDD" id="cd00336">
    <property type="entry name" value="Ribosomal_L22"/>
    <property type="match status" value="1"/>
</dbReference>
<dbReference type="Gene3D" id="3.90.470.10">
    <property type="entry name" value="Ribosomal protein L22/L17"/>
    <property type="match status" value="1"/>
</dbReference>
<dbReference type="HAMAP" id="MF_01331_A">
    <property type="entry name" value="Ribosomal_uL22_A"/>
    <property type="match status" value="1"/>
</dbReference>
<dbReference type="InterPro" id="IPR001063">
    <property type="entry name" value="Ribosomal_uL22"/>
</dbReference>
<dbReference type="InterPro" id="IPR018260">
    <property type="entry name" value="Ribosomal_uL22_CS"/>
</dbReference>
<dbReference type="InterPro" id="IPR005721">
    <property type="entry name" value="Ribosomal_uL22_euk/arc"/>
</dbReference>
<dbReference type="InterPro" id="IPR036394">
    <property type="entry name" value="Ribosomal_uL22_sf"/>
</dbReference>
<dbReference type="NCBIfam" id="NF003260">
    <property type="entry name" value="PRK04223.1"/>
    <property type="match status" value="1"/>
</dbReference>
<dbReference type="NCBIfam" id="TIGR01038">
    <property type="entry name" value="uL22_arch_euk"/>
    <property type="match status" value="1"/>
</dbReference>
<dbReference type="PANTHER" id="PTHR11593">
    <property type="entry name" value="60S RIBOSOMAL PROTEIN L17"/>
    <property type="match status" value="1"/>
</dbReference>
<dbReference type="PANTHER" id="PTHR11593:SF10">
    <property type="entry name" value="60S RIBOSOMAL PROTEIN L17"/>
    <property type="match status" value="1"/>
</dbReference>
<dbReference type="Pfam" id="PF00237">
    <property type="entry name" value="Ribosomal_L22"/>
    <property type="match status" value="1"/>
</dbReference>
<dbReference type="SUPFAM" id="SSF54843">
    <property type="entry name" value="Ribosomal protein L22"/>
    <property type="match status" value="1"/>
</dbReference>
<dbReference type="PROSITE" id="PS00464">
    <property type="entry name" value="RIBOSOMAL_L22"/>
    <property type="match status" value="1"/>
</dbReference>
<reference key="1">
    <citation type="submission" date="2007-10" db="EMBL/GenBank/DDBJ databases">
        <title>Complete sequence of Methanococcus maripaludis C6.</title>
        <authorList>
            <consortium name="US DOE Joint Genome Institute"/>
            <person name="Copeland A."/>
            <person name="Lucas S."/>
            <person name="Lapidus A."/>
            <person name="Barry K."/>
            <person name="Glavina del Rio T."/>
            <person name="Dalin E."/>
            <person name="Tice H."/>
            <person name="Pitluck S."/>
            <person name="Clum A."/>
            <person name="Schmutz J."/>
            <person name="Larimer F."/>
            <person name="Land M."/>
            <person name="Hauser L."/>
            <person name="Kyrpides N."/>
            <person name="Mikhailova N."/>
            <person name="Sieprawska-Lupa M."/>
            <person name="Whitman W.B."/>
            <person name="Richardson P."/>
        </authorList>
    </citation>
    <scope>NUCLEOTIDE SEQUENCE [LARGE SCALE GENOMIC DNA]</scope>
    <source>
        <strain>C6 / ATCC BAA-1332</strain>
    </source>
</reference>
<sequence length="153" mass="17471">MAKLKYKVEADPKNTARAMGRTLRISRKHAIELCRELSGMKLDAAVAYLNRVIALETPVPFKVHNKDLPHRKGKIGTHSGRFPQKASLEILQVLDNAKKNAEQKGLNTEKLRIKHISSNRGFTIKRYMPRAFGRASPKNQETIHIQVILEEFY</sequence>
<accession>A9A9R0</accession>
<evidence type="ECO:0000255" key="1">
    <source>
        <dbReference type="HAMAP-Rule" id="MF_01331"/>
    </source>
</evidence>
<evidence type="ECO:0000305" key="2"/>
<feature type="chain" id="PRO_0000354542" description="Large ribosomal subunit protein uL22">
    <location>
        <begin position="1"/>
        <end position="153"/>
    </location>
</feature>
<name>RL22_METM6</name>
<keyword id="KW-0687">Ribonucleoprotein</keyword>
<keyword id="KW-0689">Ribosomal protein</keyword>
<keyword id="KW-0694">RNA-binding</keyword>
<keyword id="KW-0699">rRNA-binding</keyword>
<comment type="function">
    <text evidence="1">This protein binds specifically to 23S rRNA. It makes multiple contacts with different domains of the 23S rRNA in the assembled 50S subunit and ribosome.</text>
</comment>
<comment type="function">
    <text evidence="1">The globular domain of the protein is located near the polypeptide exit tunnel on the outside of the subunit, while an extended beta-hairpin is found that lines the wall of the exit tunnel in the center of the 70S ribosome.</text>
</comment>
<comment type="subunit">
    <text evidence="1">Part of the 50S ribosomal subunit.</text>
</comment>
<comment type="similarity">
    <text evidence="1">Belongs to the universal ribosomal protein uL22 family.</text>
</comment>
<gene>
    <name evidence="1" type="primary">rpl22</name>
    <name type="ordered locus">MmarC6_1270</name>
</gene>
<protein>
    <recommendedName>
        <fullName evidence="1">Large ribosomal subunit protein uL22</fullName>
    </recommendedName>
    <alternativeName>
        <fullName evidence="2">50S ribosomal protein L22</fullName>
    </alternativeName>
</protein>
<proteinExistence type="inferred from homology"/>